<comment type="function">
    <text evidence="1">Specifically methylates the cytosine at position 1962 (m5C1962) of 23S rRNA.</text>
</comment>
<comment type="catalytic activity">
    <reaction evidence="1">
        <text>cytidine(1962) in 23S rRNA + S-adenosyl-L-methionine = 5-methylcytidine(1962) in 23S rRNA + S-adenosyl-L-homocysteine + H(+)</text>
        <dbReference type="Rhea" id="RHEA:42912"/>
        <dbReference type="Rhea" id="RHEA-COMP:10382"/>
        <dbReference type="Rhea" id="RHEA-COMP:10386"/>
        <dbReference type="ChEBI" id="CHEBI:15378"/>
        <dbReference type="ChEBI" id="CHEBI:57856"/>
        <dbReference type="ChEBI" id="CHEBI:59789"/>
        <dbReference type="ChEBI" id="CHEBI:74483"/>
        <dbReference type="ChEBI" id="CHEBI:82748"/>
        <dbReference type="EC" id="2.1.1.191"/>
    </reaction>
</comment>
<comment type="subcellular location">
    <subcellularLocation>
        <location evidence="1">Cytoplasm</location>
    </subcellularLocation>
</comment>
<comment type="similarity">
    <text evidence="1">Belongs to the methyltransferase superfamily. RlmI family.</text>
</comment>
<protein>
    <recommendedName>
        <fullName evidence="1">Ribosomal RNA large subunit methyltransferase I</fullName>
        <ecNumber evidence="1">2.1.1.191</ecNumber>
    </recommendedName>
    <alternativeName>
        <fullName evidence="1">23S rRNA m5C1962 methyltransferase</fullName>
    </alternativeName>
    <alternativeName>
        <fullName evidence="1">rRNA (cytosine-C(5)-)-methyltransferase RlmI</fullName>
    </alternativeName>
</protein>
<sequence>MTVRLILAKGREKSLLRRHPWIFSGAVQRLEGDALSGETIDILDSQGKWLARAAYSPESQILARVWTFQQDEVIDCAFFIRRLQQAQNWRDWLAQRDGLNGYRLIAGESDGLPGITIDRFQNFLVLQLLSAGAEYQRETLVSALQHCYPECSIYDRSDVSVRKKEGLPLTQGLICGEMPPALLPISENGMQLFVDIQQGHKTGFYLDQRDSRLAARNYANGRRVLNCFSYTGAFAVAALMGNCQQVISVDTSQSVLDIAKQNIELNQLDLSKTEFVRDDVFQLLRSYRAQGEKFDLIIMDPPKFVENKSQLASACRGYKDINMLAIQLLRPGGILLSFSCSGLMPVDLFQKILADAALDAGHDIQFIEQFRQAADHPVIAAYPEGLYLKGFACRIM</sequence>
<reference key="1">
    <citation type="journal article" date="2007" name="PLoS Genet.">
        <title>The complete genome sequence of Yersinia pseudotuberculosis IP31758, the causative agent of Far East scarlet-like fever.</title>
        <authorList>
            <person name="Eppinger M."/>
            <person name="Rosovitz M.J."/>
            <person name="Fricke W.F."/>
            <person name="Rasko D.A."/>
            <person name="Kokorina G."/>
            <person name="Fayolle C."/>
            <person name="Lindler L.E."/>
            <person name="Carniel E."/>
            <person name="Ravel J."/>
        </authorList>
    </citation>
    <scope>NUCLEOTIDE SEQUENCE [LARGE SCALE GENOMIC DNA]</scope>
    <source>
        <strain>IP 31758</strain>
    </source>
</reference>
<feature type="chain" id="PRO_0000366287" description="Ribosomal RNA large subunit methyltransferase I">
    <location>
        <begin position="1"/>
        <end position="396"/>
    </location>
</feature>
<feature type="domain" description="PUA" evidence="1">
    <location>
        <begin position="2"/>
        <end position="81"/>
    </location>
</feature>
<accession>A7FJR8</accession>
<gene>
    <name evidence="1" type="primary">rlmI</name>
    <name type="ordered locus">YpsIP31758_2531</name>
</gene>
<evidence type="ECO:0000255" key="1">
    <source>
        <dbReference type="HAMAP-Rule" id="MF_01857"/>
    </source>
</evidence>
<keyword id="KW-0963">Cytoplasm</keyword>
<keyword id="KW-0489">Methyltransferase</keyword>
<keyword id="KW-0694">RNA-binding</keyword>
<keyword id="KW-0698">rRNA processing</keyword>
<keyword id="KW-0949">S-adenosyl-L-methionine</keyword>
<keyword id="KW-0808">Transferase</keyword>
<dbReference type="EC" id="2.1.1.191" evidence="1"/>
<dbReference type="EMBL" id="CP000720">
    <property type="protein sequence ID" value="ABS49503.1"/>
    <property type="molecule type" value="Genomic_DNA"/>
</dbReference>
<dbReference type="RefSeq" id="WP_012105365.1">
    <property type="nucleotide sequence ID" value="NC_009708.1"/>
</dbReference>
<dbReference type="SMR" id="A7FJR8"/>
<dbReference type="KEGG" id="ypi:YpsIP31758_2531"/>
<dbReference type="HOGENOM" id="CLU_014042_0_0_6"/>
<dbReference type="Proteomes" id="UP000002412">
    <property type="component" value="Chromosome"/>
</dbReference>
<dbReference type="GO" id="GO:0005737">
    <property type="term" value="C:cytoplasm"/>
    <property type="evidence" value="ECO:0007669"/>
    <property type="project" value="UniProtKB-SubCell"/>
</dbReference>
<dbReference type="GO" id="GO:0003723">
    <property type="term" value="F:RNA binding"/>
    <property type="evidence" value="ECO:0007669"/>
    <property type="project" value="UniProtKB-KW"/>
</dbReference>
<dbReference type="GO" id="GO:0016434">
    <property type="term" value="F:rRNA (cytosine) methyltransferase activity"/>
    <property type="evidence" value="ECO:0007669"/>
    <property type="project" value="UniProtKB-UniRule"/>
</dbReference>
<dbReference type="CDD" id="cd02440">
    <property type="entry name" value="AdoMet_MTases"/>
    <property type="match status" value="1"/>
</dbReference>
<dbReference type="CDD" id="cd21153">
    <property type="entry name" value="PUA_RlmI"/>
    <property type="match status" value="1"/>
</dbReference>
<dbReference type="CDD" id="cd11572">
    <property type="entry name" value="RlmI_M_like"/>
    <property type="match status" value="1"/>
</dbReference>
<dbReference type="Gene3D" id="2.30.130.10">
    <property type="entry name" value="PUA domain"/>
    <property type="match status" value="1"/>
</dbReference>
<dbReference type="Gene3D" id="3.30.750.80">
    <property type="entry name" value="RNA methyltransferase domain (HRMD) like"/>
    <property type="match status" value="1"/>
</dbReference>
<dbReference type="Gene3D" id="3.40.50.150">
    <property type="entry name" value="Vaccinia Virus protein VP39"/>
    <property type="match status" value="1"/>
</dbReference>
<dbReference type="HAMAP" id="MF_01857">
    <property type="entry name" value="23SrRNA_methyltr_I"/>
    <property type="match status" value="1"/>
</dbReference>
<dbReference type="InterPro" id="IPR002478">
    <property type="entry name" value="PUA"/>
</dbReference>
<dbReference type="InterPro" id="IPR015947">
    <property type="entry name" value="PUA-like_sf"/>
</dbReference>
<dbReference type="InterPro" id="IPR036974">
    <property type="entry name" value="PUA_sf"/>
</dbReference>
<dbReference type="InterPro" id="IPR023542">
    <property type="entry name" value="RLMI"/>
</dbReference>
<dbReference type="InterPro" id="IPR041532">
    <property type="entry name" value="RlmI-like_PUA"/>
</dbReference>
<dbReference type="InterPro" id="IPR019614">
    <property type="entry name" value="SAM-dep_methyl-trfase"/>
</dbReference>
<dbReference type="InterPro" id="IPR029063">
    <property type="entry name" value="SAM-dependent_MTases_sf"/>
</dbReference>
<dbReference type="NCBIfam" id="NF011707">
    <property type="entry name" value="PRK15128.1"/>
    <property type="match status" value="1"/>
</dbReference>
<dbReference type="PANTHER" id="PTHR42873">
    <property type="entry name" value="RIBOSOMAL RNA LARGE SUBUNIT METHYLTRANSFERASE"/>
    <property type="match status" value="1"/>
</dbReference>
<dbReference type="PANTHER" id="PTHR42873:SF1">
    <property type="entry name" value="S-ADENOSYLMETHIONINE-DEPENDENT METHYLTRANSFERASE DOMAIN-CONTAINING PROTEIN"/>
    <property type="match status" value="1"/>
</dbReference>
<dbReference type="Pfam" id="PF10672">
    <property type="entry name" value="Methyltrans_SAM"/>
    <property type="match status" value="1"/>
</dbReference>
<dbReference type="Pfam" id="PF17785">
    <property type="entry name" value="PUA_3"/>
    <property type="match status" value="1"/>
</dbReference>
<dbReference type="SMART" id="SM00359">
    <property type="entry name" value="PUA"/>
    <property type="match status" value="1"/>
</dbReference>
<dbReference type="SUPFAM" id="SSF88697">
    <property type="entry name" value="PUA domain-like"/>
    <property type="match status" value="1"/>
</dbReference>
<dbReference type="SUPFAM" id="SSF53335">
    <property type="entry name" value="S-adenosyl-L-methionine-dependent methyltransferases"/>
    <property type="match status" value="1"/>
</dbReference>
<dbReference type="PROSITE" id="PS50890">
    <property type="entry name" value="PUA"/>
    <property type="match status" value="1"/>
</dbReference>
<organism>
    <name type="scientific">Yersinia pseudotuberculosis serotype O:1b (strain IP 31758)</name>
    <dbReference type="NCBI Taxonomy" id="349747"/>
    <lineage>
        <taxon>Bacteria</taxon>
        <taxon>Pseudomonadati</taxon>
        <taxon>Pseudomonadota</taxon>
        <taxon>Gammaproteobacteria</taxon>
        <taxon>Enterobacterales</taxon>
        <taxon>Yersiniaceae</taxon>
        <taxon>Yersinia</taxon>
    </lineage>
</organism>
<proteinExistence type="inferred from homology"/>
<name>RLMI_YERP3</name>